<sequence length="196" mass="21642">MSAGVRWKITWENDLEPSDHAELSEFFRATYGPTGAFNAKPFETGRSWAGARPERRAIAYDSKGIASHMGLLRRFIKVGDTDLLVAELGLYGVRPDLEGLGIPHSIRALAPALQELAVPFAFGTVRHAMRNHVERFCRDGISNIVTGVRVRSTLPDALPDMPSTRTEDVLVLVFPIGRPMSEWPSGSLIERNGCEL</sequence>
<geneLocation type="plasmid">
    <name>sym pRtr843e</name>
</geneLocation>
<organism>
    <name type="scientific">Rhizobium leguminosarum bv. trifolii</name>
    <dbReference type="NCBI Taxonomy" id="386"/>
    <lineage>
        <taxon>Bacteria</taxon>
        <taxon>Pseudomonadati</taxon>
        <taxon>Pseudomonadota</taxon>
        <taxon>Alphaproteobacteria</taxon>
        <taxon>Hyphomicrobiales</taxon>
        <taxon>Rhizobiaceae</taxon>
        <taxon>Rhizobium/Agrobacterium group</taxon>
        <taxon>Rhizobium</taxon>
    </lineage>
</organism>
<reference key="1">
    <citation type="journal article" date="1986" name="Nucleic Acids Res.">
        <title>DNA sequence of Rhizobium trifolii nodulation genes reveals a reiterated and potentially regulatory sequence preceding nodABC and nodFE.</title>
        <authorList>
            <person name="Schofield P.R."/>
            <person name="Watson J.M."/>
        </authorList>
    </citation>
    <scope>NUCLEOTIDE SEQUENCE [GENOMIC DNA]</scope>
    <source>
        <strain>ANU 843</strain>
    </source>
</reference>
<accession>P04673</accession>
<comment type="function">
    <text>N-acyltransferase required for nodulation. Acts in the production of a small, heat-stable compound (Nod) that stimulates mitosis in various plant protoplasts.</text>
</comment>
<comment type="subcellular location">
    <subcellularLocation>
        <location>Cytoplasm</location>
    </subcellularLocation>
</comment>
<comment type="similarity">
    <text evidence="1">Belongs to the NodA family.</text>
</comment>
<protein>
    <recommendedName>
        <fullName>Nodulation protein A</fullName>
        <ecNumber>2.3.1.-</ecNumber>
    </recommendedName>
</protein>
<dbReference type="EC" id="2.3.1.-"/>
<dbReference type="EMBL" id="X03721">
    <property type="protein sequence ID" value="CAA27353.2"/>
    <property type="molecule type" value="Genomic_DNA"/>
</dbReference>
<dbReference type="PIR" id="A23766">
    <property type="entry name" value="A23766"/>
</dbReference>
<dbReference type="SMR" id="P04673"/>
<dbReference type="GO" id="GO:0005829">
    <property type="term" value="C:cytosol"/>
    <property type="evidence" value="ECO:0007669"/>
    <property type="project" value="InterPro"/>
</dbReference>
<dbReference type="GO" id="GO:0016746">
    <property type="term" value="F:acyltransferase activity"/>
    <property type="evidence" value="ECO:0007669"/>
    <property type="project" value="UniProtKB-UniRule"/>
</dbReference>
<dbReference type="Gene3D" id="3.40.630.30">
    <property type="match status" value="1"/>
</dbReference>
<dbReference type="HAMAP" id="MF_00084">
    <property type="entry name" value="NodA"/>
    <property type="match status" value="1"/>
</dbReference>
<dbReference type="InterPro" id="IPR003484">
    <property type="entry name" value="NodA"/>
</dbReference>
<dbReference type="InterPro" id="IPR020567">
    <property type="entry name" value="Nodulation_prot_NodA_CS"/>
</dbReference>
<dbReference type="NCBIfam" id="TIGR04245">
    <property type="entry name" value="nodulat_NodA"/>
    <property type="match status" value="1"/>
</dbReference>
<dbReference type="NCBIfam" id="NF001974">
    <property type="entry name" value="PRK00756.1"/>
    <property type="match status" value="1"/>
</dbReference>
<dbReference type="Pfam" id="PF02474">
    <property type="entry name" value="NodA"/>
    <property type="match status" value="1"/>
</dbReference>
<dbReference type="PROSITE" id="PS01349">
    <property type="entry name" value="NODA"/>
    <property type="match status" value="1"/>
</dbReference>
<name>NODA_RHILT</name>
<evidence type="ECO:0000305" key="1"/>
<feature type="chain" id="PRO_0000196340" description="Nodulation protein A">
    <location>
        <begin position="1"/>
        <end position="196"/>
    </location>
</feature>
<keyword id="KW-0012">Acyltransferase</keyword>
<keyword id="KW-0963">Cytoplasm</keyword>
<keyword id="KW-0536">Nodulation</keyword>
<keyword id="KW-0614">Plasmid</keyword>
<keyword id="KW-0808">Transferase</keyword>
<gene>
    <name type="primary">nodA</name>
</gene>
<proteinExistence type="inferred from homology"/>